<proteinExistence type="inferred from homology"/>
<accession>Q6MJR4</accession>
<evidence type="ECO:0000255" key="1">
    <source>
        <dbReference type="HAMAP-Rule" id="MF_01334"/>
    </source>
</evidence>
<evidence type="ECO:0000256" key="2">
    <source>
        <dbReference type="SAM" id="MobiDB-lite"/>
    </source>
</evidence>
<evidence type="ECO:0000305" key="3"/>
<reference key="1">
    <citation type="journal article" date="2004" name="Science">
        <title>A predator unmasked: life cycle of Bdellovibrio bacteriovorus from a genomic perspective.</title>
        <authorList>
            <person name="Rendulic S."/>
            <person name="Jagtap P."/>
            <person name="Rosinus A."/>
            <person name="Eppinger M."/>
            <person name="Baar C."/>
            <person name="Lanz C."/>
            <person name="Keller H."/>
            <person name="Lambert C."/>
            <person name="Evans K.J."/>
            <person name="Goesmann A."/>
            <person name="Meyer F."/>
            <person name="Sockett R.E."/>
            <person name="Schuster S.C."/>
        </authorList>
    </citation>
    <scope>NUCLEOTIDE SEQUENCE [LARGE SCALE GENOMIC DNA]</scope>
    <source>
        <strain>ATCC 15356 / DSM 50701 / NCIMB 9529 / HD100</strain>
    </source>
</reference>
<sequence length="212" mass="22472">MKTRIDLTVEPRETGKHNSRGLRTSRNVPAVIYGAVTPTNVSVGEKEIVKYNTRAYENALFNLKSSDKTANGIVVLIKSVDVHPLTRRPQHVDFFALDLKKAVRVNVEVRLEGKAIGLSEGGLLNVVLRSVEVECLPTEIPEFFTADISNLAVGDALHVSDIKVSGSVKMITGAEQTIAVVNAQEEEVAAAPAAAAAPAAAAPAAKAPAAKK</sequence>
<keyword id="KW-1185">Reference proteome</keyword>
<keyword id="KW-0687">Ribonucleoprotein</keyword>
<keyword id="KW-0689">Ribosomal protein</keyword>
<keyword id="KW-0694">RNA-binding</keyword>
<keyword id="KW-0699">rRNA-binding</keyword>
<organism>
    <name type="scientific">Bdellovibrio bacteriovorus (strain ATCC 15356 / DSM 50701 / NCIMB 9529 / HD100)</name>
    <dbReference type="NCBI Taxonomy" id="264462"/>
    <lineage>
        <taxon>Bacteria</taxon>
        <taxon>Pseudomonadati</taxon>
        <taxon>Bdellovibrionota</taxon>
        <taxon>Bdellovibrionia</taxon>
        <taxon>Bdellovibrionales</taxon>
        <taxon>Pseudobdellovibrionaceae</taxon>
        <taxon>Bdellovibrio</taxon>
    </lineage>
</organism>
<dbReference type="EMBL" id="BX842653">
    <property type="protein sequence ID" value="CAE80496.1"/>
    <property type="molecule type" value="Genomic_DNA"/>
</dbReference>
<dbReference type="RefSeq" id="WP_011165099.1">
    <property type="nucleotide sequence ID" value="NC_005363.1"/>
</dbReference>
<dbReference type="SMR" id="Q6MJR4"/>
<dbReference type="STRING" id="264462.Bd2705"/>
<dbReference type="GeneID" id="93013595"/>
<dbReference type="KEGG" id="bba:Bd2705"/>
<dbReference type="eggNOG" id="COG1825">
    <property type="taxonomic scope" value="Bacteria"/>
</dbReference>
<dbReference type="HOGENOM" id="CLU_075939_2_1_7"/>
<dbReference type="Proteomes" id="UP000008080">
    <property type="component" value="Chromosome"/>
</dbReference>
<dbReference type="GO" id="GO:0022625">
    <property type="term" value="C:cytosolic large ribosomal subunit"/>
    <property type="evidence" value="ECO:0007669"/>
    <property type="project" value="TreeGrafter"/>
</dbReference>
<dbReference type="GO" id="GO:0008097">
    <property type="term" value="F:5S rRNA binding"/>
    <property type="evidence" value="ECO:0007669"/>
    <property type="project" value="InterPro"/>
</dbReference>
<dbReference type="GO" id="GO:0003735">
    <property type="term" value="F:structural constituent of ribosome"/>
    <property type="evidence" value="ECO:0007669"/>
    <property type="project" value="InterPro"/>
</dbReference>
<dbReference type="GO" id="GO:0006412">
    <property type="term" value="P:translation"/>
    <property type="evidence" value="ECO:0007669"/>
    <property type="project" value="UniProtKB-UniRule"/>
</dbReference>
<dbReference type="CDD" id="cd00495">
    <property type="entry name" value="Ribosomal_L25_TL5_CTC"/>
    <property type="match status" value="1"/>
</dbReference>
<dbReference type="Gene3D" id="2.170.120.20">
    <property type="entry name" value="Ribosomal protein L25, beta domain"/>
    <property type="match status" value="1"/>
</dbReference>
<dbReference type="Gene3D" id="2.40.240.10">
    <property type="entry name" value="Ribosomal Protein L25, Chain P"/>
    <property type="match status" value="1"/>
</dbReference>
<dbReference type="HAMAP" id="MF_01334">
    <property type="entry name" value="Ribosomal_bL25_CTC"/>
    <property type="match status" value="1"/>
</dbReference>
<dbReference type="InterPro" id="IPR020056">
    <property type="entry name" value="Rbsml_bL25/Gln-tRNA_synth_N"/>
</dbReference>
<dbReference type="InterPro" id="IPR011035">
    <property type="entry name" value="Ribosomal_bL25/Gln-tRNA_synth"/>
</dbReference>
<dbReference type="InterPro" id="IPR020057">
    <property type="entry name" value="Ribosomal_bL25_b-dom"/>
</dbReference>
<dbReference type="InterPro" id="IPR037121">
    <property type="entry name" value="Ribosomal_bL25_C"/>
</dbReference>
<dbReference type="InterPro" id="IPR001021">
    <property type="entry name" value="Ribosomal_bL25_long"/>
</dbReference>
<dbReference type="InterPro" id="IPR029751">
    <property type="entry name" value="Ribosomal_L25_dom"/>
</dbReference>
<dbReference type="InterPro" id="IPR020930">
    <property type="entry name" value="Ribosomal_uL5_bac-type"/>
</dbReference>
<dbReference type="NCBIfam" id="TIGR00731">
    <property type="entry name" value="bL25_bact_ctc"/>
    <property type="match status" value="1"/>
</dbReference>
<dbReference type="PANTHER" id="PTHR33284">
    <property type="entry name" value="RIBOSOMAL PROTEIN L25/GLN-TRNA SYNTHETASE, ANTI-CODON-BINDING DOMAIN-CONTAINING PROTEIN"/>
    <property type="match status" value="1"/>
</dbReference>
<dbReference type="PANTHER" id="PTHR33284:SF1">
    <property type="entry name" value="RIBOSOMAL PROTEIN L25_GLN-TRNA SYNTHETASE, ANTI-CODON-BINDING DOMAIN-CONTAINING PROTEIN"/>
    <property type="match status" value="1"/>
</dbReference>
<dbReference type="Pfam" id="PF01386">
    <property type="entry name" value="Ribosomal_L25p"/>
    <property type="match status" value="1"/>
</dbReference>
<dbReference type="Pfam" id="PF14693">
    <property type="entry name" value="Ribosomal_TL5_C"/>
    <property type="match status" value="1"/>
</dbReference>
<dbReference type="SUPFAM" id="SSF50715">
    <property type="entry name" value="Ribosomal protein L25-like"/>
    <property type="match status" value="1"/>
</dbReference>
<comment type="function">
    <text evidence="1">This is one of the proteins that binds to the 5S RNA in the ribosome where it forms part of the central protuberance.</text>
</comment>
<comment type="subunit">
    <text evidence="1">Part of the 50S ribosomal subunit; part of the 5S rRNA/L5/L18/L25 subcomplex. Contacts the 5S rRNA. Binds to the 5S rRNA independently of L5 and L18.</text>
</comment>
<comment type="similarity">
    <text evidence="1">Belongs to the bacterial ribosomal protein bL25 family. CTC subfamily.</text>
</comment>
<gene>
    <name evidence="1" type="primary">rplY</name>
    <name evidence="1" type="synonym">ctc</name>
    <name type="ordered locus">Bd2705</name>
</gene>
<name>RL25_BDEBA</name>
<feature type="chain" id="PRO_0000181516" description="Large ribosomal subunit protein bL25">
    <location>
        <begin position="1"/>
        <end position="212"/>
    </location>
</feature>
<feature type="region of interest" description="Disordered" evidence="2">
    <location>
        <begin position="1"/>
        <end position="22"/>
    </location>
</feature>
<feature type="compositionally biased region" description="Basic and acidic residues" evidence="2">
    <location>
        <begin position="1"/>
        <end position="16"/>
    </location>
</feature>
<protein>
    <recommendedName>
        <fullName evidence="1">Large ribosomal subunit protein bL25</fullName>
    </recommendedName>
    <alternativeName>
        <fullName evidence="3">50S ribosomal protein L25</fullName>
    </alternativeName>
    <alternativeName>
        <fullName evidence="1">General stress protein CTC</fullName>
    </alternativeName>
</protein>